<comment type="subunit">
    <text evidence="1">Forms oligomers.</text>
</comment>
<comment type="subcellular location">
    <subcellularLocation>
        <location evidence="1">Cytoplasm</location>
        <location evidence="1">Nucleoid</location>
    </subcellularLocation>
</comment>
<comment type="similarity">
    <text evidence="1">Belongs to the MraZ family.</text>
</comment>
<proteinExistence type="inferred from homology"/>
<dbReference type="EMBL" id="CP000388">
    <property type="protein sequence ID" value="ABG42030.1"/>
    <property type="molecule type" value="Genomic_DNA"/>
</dbReference>
<dbReference type="RefSeq" id="WP_006994258.1">
    <property type="nucleotide sequence ID" value="NC_008228.1"/>
</dbReference>
<dbReference type="SMR" id="Q15Q08"/>
<dbReference type="STRING" id="342610.Patl_3528"/>
<dbReference type="KEGG" id="pat:Patl_3528"/>
<dbReference type="eggNOG" id="COG2001">
    <property type="taxonomic scope" value="Bacteria"/>
</dbReference>
<dbReference type="HOGENOM" id="CLU_107907_2_0_6"/>
<dbReference type="OrthoDB" id="9807753at2"/>
<dbReference type="Proteomes" id="UP000001981">
    <property type="component" value="Chromosome"/>
</dbReference>
<dbReference type="GO" id="GO:0005737">
    <property type="term" value="C:cytoplasm"/>
    <property type="evidence" value="ECO:0007669"/>
    <property type="project" value="UniProtKB-UniRule"/>
</dbReference>
<dbReference type="GO" id="GO:0009295">
    <property type="term" value="C:nucleoid"/>
    <property type="evidence" value="ECO:0007669"/>
    <property type="project" value="UniProtKB-SubCell"/>
</dbReference>
<dbReference type="GO" id="GO:0003700">
    <property type="term" value="F:DNA-binding transcription factor activity"/>
    <property type="evidence" value="ECO:0007669"/>
    <property type="project" value="UniProtKB-UniRule"/>
</dbReference>
<dbReference type="GO" id="GO:0000976">
    <property type="term" value="F:transcription cis-regulatory region binding"/>
    <property type="evidence" value="ECO:0007669"/>
    <property type="project" value="TreeGrafter"/>
</dbReference>
<dbReference type="GO" id="GO:2000143">
    <property type="term" value="P:negative regulation of DNA-templated transcription initiation"/>
    <property type="evidence" value="ECO:0007669"/>
    <property type="project" value="TreeGrafter"/>
</dbReference>
<dbReference type="CDD" id="cd16321">
    <property type="entry name" value="MraZ_C"/>
    <property type="match status" value="1"/>
</dbReference>
<dbReference type="CDD" id="cd16320">
    <property type="entry name" value="MraZ_N"/>
    <property type="match status" value="1"/>
</dbReference>
<dbReference type="FunFam" id="3.40.1550.20:FF:000001">
    <property type="entry name" value="Transcriptional regulator MraZ"/>
    <property type="match status" value="1"/>
</dbReference>
<dbReference type="Gene3D" id="3.40.1550.20">
    <property type="entry name" value="Transcriptional regulator MraZ domain"/>
    <property type="match status" value="1"/>
</dbReference>
<dbReference type="HAMAP" id="MF_01008">
    <property type="entry name" value="MraZ"/>
    <property type="match status" value="1"/>
</dbReference>
<dbReference type="InterPro" id="IPR003444">
    <property type="entry name" value="MraZ"/>
</dbReference>
<dbReference type="InterPro" id="IPR035644">
    <property type="entry name" value="MraZ_C"/>
</dbReference>
<dbReference type="InterPro" id="IPR020603">
    <property type="entry name" value="MraZ_dom"/>
</dbReference>
<dbReference type="InterPro" id="IPR035642">
    <property type="entry name" value="MraZ_N"/>
</dbReference>
<dbReference type="InterPro" id="IPR038619">
    <property type="entry name" value="MraZ_sf"/>
</dbReference>
<dbReference type="InterPro" id="IPR007159">
    <property type="entry name" value="SpoVT-AbrB_dom"/>
</dbReference>
<dbReference type="InterPro" id="IPR037914">
    <property type="entry name" value="SpoVT-AbrB_sf"/>
</dbReference>
<dbReference type="NCBIfam" id="TIGR00242">
    <property type="entry name" value="division/cell wall cluster transcriptional repressor MraZ"/>
    <property type="match status" value="1"/>
</dbReference>
<dbReference type="PANTHER" id="PTHR34701">
    <property type="entry name" value="TRANSCRIPTIONAL REGULATOR MRAZ"/>
    <property type="match status" value="1"/>
</dbReference>
<dbReference type="PANTHER" id="PTHR34701:SF1">
    <property type="entry name" value="TRANSCRIPTIONAL REGULATOR MRAZ"/>
    <property type="match status" value="1"/>
</dbReference>
<dbReference type="Pfam" id="PF02381">
    <property type="entry name" value="MraZ"/>
    <property type="match status" value="2"/>
</dbReference>
<dbReference type="SUPFAM" id="SSF89447">
    <property type="entry name" value="AbrB/MazE/MraZ-like"/>
    <property type="match status" value="1"/>
</dbReference>
<dbReference type="PROSITE" id="PS51740">
    <property type="entry name" value="SPOVT_ABRB"/>
    <property type="match status" value="2"/>
</dbReference>
<organism>
    <name type="scientific">Pseudoalteromonas atlantica (strain T6c / ATCC BAA-1087)</name>
    <dbReference type="NCBI Taxonomy" id="3042615"/>
    <lineage>
        <taxon>Bacteria</taxon>
        <taxon>Pseudomonadati</taxon>
        <taxon>Pseudomonadota</taxon>
        <taxon>Gammaproteobacteria</taxon>
        <taxon>Alteromonadales</taxon>
        <taxon>Alteromonadaceae</taxon>
        <taxon>Paraglaciecola</taxon>
    </lineage>
</organism>
<keyword id="KW-0963">Cytoplasm</keyword>
<keyword id="KW-0238">DNA-binding</keyword>
<keyword id="KW-0677">Repeat</keyword>
<keyword id="KW-0804">Transcription</keyword>
<keyword id="KW-0805">Transcription regulation</keyword>
<sequence length="152" mass="17680">MFRGANAINLDVKGRVTIPTKYRQSLLDDCQGQLVCTIDTQQPCLLLYPLPEWEEIELKLSRLSSMNPHERRLQRLLLGYATEGEMDKSGRFLLTAPLREHAHLDKQIMLVGQLNKFEIWDHSVWQQQIQQDVATEQEAAFELTERLQDFSL</sequence>
<reference key="1">
    <citation type="submission" date="2006-06" db="EMBL/GenBank/DDBJ databases">
        <title>Complete sequence of Pseudoalteromonas atlantica T6c.</title>
        <authorList>
            <consortium name="US DOE Joint Genome Institute"/>
            <person name="Copeland A."/>
            <person name="Lucas S."/>
            <person name="Lapidus A."/>
            <person name="Barry K."/>
            <person name="Detter J.C."/>
            <person name="Glavina del Rio T."/>
            <person name="Hammon N."/>
            <person name="Israni S."/>
            <person name="Dalin E."/>
            <person name="Tice H."/>
            <person name="Pitluck S."/>
            <person name="Saunders E."/>
            <person name="Brettin T."/>
            <person name="Bruce D."/>
            <person name="Han C."/>
            <person name="Tapia R."/>
            <person name="Gilna P."/>
            <person name="Schmutz J."/>
            <person name="Larimer F."/>
            <person name="Land M."/>
            <person name="Hauser L."/>
            <person name="Kyrpides N."/>
            <person name="Kim E."/>
            <person name="Karls A.C."/>
            <person name="Bartlett D."/>
            <person name="Higgins B.P."/>
            <person name="Richardson P."/>
        </authorList>
    </citation>
    <scope>NUCLEOTIDE SEQUENCE [LARGE SCALE GENOMIC DNA]</scope>
    <source>
        <strain>T6c / ATCC BAA-1087</strain>
    </source>
</reference>
<accession>Q15Q08</accession>
<name>MRAZ_PSEA6</name>
<protein>
    <recommendedName>
        <fullName>Transcriptional regulator MraZ</fullName>
    </recommendedName>
</protein>
<feature type="chain" id="PRO_1000062911" description="Transcriptional regulator MraZ">
    <location>
        <begin position="1"/>
        <end position="152"/>
    </location>
</feature>
<feature type="domain" description="SpoVT-AbrB 1" evidence="2">
    <location>
        <begin position="5"/>
        <end position="52"/>
    </location>
</feature>
<feature type="domain" description="SpoVT-AbrB 2" evidence="2">
    <location>
        <begin position="81"/>
        <end position="124"/>
    </location>
</feature>
<evidence type="ECO:0000255" key="1">
    <source>
        <dbReference type="HAMAP-Rule" id="MF_01008"/>
    </source>
</evidence>
<evidence type="ECO:0000255" key="2">
    <source>
        <dbReference type="PROSITE-ProRule" id="PRU01076"/>
    </source>
</evidence>
<gene>
    <name evidence="1" type="primary">mraZ</name>
    <name type="ordered locus">Patl_3528</name>
</gene>